<comment type="function">
    <text evidence="1">Accelerates the degradation of transcripts by removing pyrophosphate from the 5'-end of triphosphorylated RNA, leading to a more labile monophosphorylated state that can stimulate subsequent ribonuclease cleavage.</text>
</comment>
<comment type="cofactor">
    <cofactor evidence="1">
        <name>a divalent metal cation</name>
        <dbReference type="ChEBI" id="CHEBI:60240"/>
    </cofactor>
</comment>
<comment type="similarity">
    <text evidence="1">Belongs to the Nudix hydrolase family. RppH subfamily.</text>
</comment>
<gene>
    <name evidence="1" type="primary">rppH</name>
    <name evidence="1" type="synonym">nudH</name>
    <name type="ordered locus">NMA1942</name>
</gene>
<feature type="chain" id="PRO_0000057012" description="RNA pyrophosphohydrolase">
    <location>
        <begin position="1"/>
        <end position="174"/>
    </location>
</feature>
<feature type="domain" description="Nudix hydrolase" evidence="1">
    <location>
        <begin position="6"/>
        <end position="149"/>
    </location>
</feature>
<feature type="short sequence motif" description="Nudix box">
    <location>
        <begin position="38"/>
        <end position="59"/>
    </location>
</feature>
<protein>
    <recommendedName>
        <fullName evidence="1">RNA pyrophosphohydrolase</fullName>
        <ecNumber evidence="1">3.6.1.-</ecNumber>
    </recommendedName>
    <alternativeName>
        <fullName evidence="1">(Di)nucleoside polyphosphate hydrolase</fullName>
    </alternativeName>
</protein>
<sequence>MLDREGYRPNVGIILINERNEVFWGKRVREHSWQFPQGGIKPGESPETAMYRELYEEVGLLPQHVKIIGRTRDWLRYDVPNNWVRREWRGSYRGQKQIWYLLRLTGRDCDVNLRATRHPEFDGWRWHQYWAPVDEVIDFKRDVYLGALKELSSRFLRGMESYEDFAARQSSDNR</sequence>
<reference key="1">
    <citation type="journal article" date="2000" name="Nature">
        <title>Complete DNA sequence of a serogroup A strain of Neisseria meningitidis Z2491.</title>
        <authorList>
            <person name="Parkhill J."/>
            <person name="Achtman M."/>
            <person name="James K.D."/>
            <person name="Bentley S.D."/>
            <person name="Churcher C.M."/>
            <person name="Klee S.R."/>
            <person name="Morelli G."/>
            <person name="Basham D."/>
            <person name="Brown D."/>
            <person name="Chillingworth T."/>
            <person name="Davies R.M."/>
            <person name="Davis P."/>
            <person name="Devlin K."/>
            <person name="Feltwell T."/>
            <person name="Hamlin N."/>
            <person name="Holroyd S."/>
            <person name="Jagels K."/>
            <person name="Leather S."/>
            <person name="Moule S."/>
            <person name="Mungall K.L."/>
            <person name="Quail M.A."/>
            <person name="Rajandream M.A."/>
            <person name="Rutherford K.M."/>
            <person name="Simmonds M."/>
            <person name="Skelton J."/>
            <person name="Whitehead S."/>
            <person name="Spratt B.G."/>
            <person name="Barrell B.G."/>
        </authorList>
    </citation>
    <scope>NUCLEOTIDE SEQUENCE [LARGE SCALE GENOMIC DNA]</scope>
    <source>
        <strain>DSM 15465 / Z2491</strain>
    </source>
</reference>
<name>RPPH_NEIMA</name>
<dbReference type="EC" id="3.6.1.-" evidence="1"/>
<dbReference type="EMBL" id="AL157959">
    <property type="protein sequence ID" value="CAM09054.1"/>
    <property type="molecule type" value="Genomic_DNA"/>
</dbReference>
<dbReference type="PIR" id="D81822">
    <property type="entry name" value="D81822"/>
</dbReference>
<dbReference type="RefSeq" id="WP_002246364.1">
    <property type="nucleotide sequence ID" value="NC_003116.1"/>
</dbReference>
<dbReference type="SMR" id="Q9JT78"/>
<dbReference type="EnsemblBacteria" id="CAM09054">
    <property type="protein sequence ID" value="CAM09054"/>
    <property type="gene ID" value="NMA1942"/>
</dbReference>
<dbReference type="KEGG" id="nma:NMA1942"/>
<dbReference type="HOGENOM" id="CLU_087195_3_1_4"/>
<dbReference type="Proteomes" id="UP000000626">
    <property type="component" value="Chromosome"/>
</dbReference>
<dbReference type="GO" id="GO:0016462">
    <property type="term" value="F:pyrophosphatase activity"/>
    <property type="evidence" value="ECO:0007669"/>
    <property type="project" value="UniProtKB-ARBA"/>
</dbReference>
<dbReference type="CDD" id="cd03671">
    <property type="entry name" value="NUDIX_Ap4A_hydrolase_plant_like"/>
    <property type="match status" value="1"/>
</dbReference>
<dbReference type="FunFam" id="3.90.79.10:FF:000001">
    <property type="entry name" value="RNA pyrophosphohydrolase"/>
    <property type="match status" value="1"/>
</dbReference>
<dbReference type="Gene3D" id="3.90.79.10">
    <property type="entry name" value="Nucleoside Triphosphate Pyrophosphohydrolase"/>
    <property type="match status" value="1"/>
</dbReference>
<dbReference type="HAMAP" id="MF_00298">
    <property type="entry name" value="Nudix_RppH"/>
    <property type="match status" value="1"/>
</dbReference>
<dbReference type="InterPro" id="IPR020476">
    <property type="entry name" value="Nudix_hydrolase"/>
</dbReference>
<dbReference type="InterPro" id="IPR015797">
    <property type="entry name" value="NUDIX_hydrolase-like_dom_sf"/>
</dbReference>
<dbReference type="InterPro" id="IPR020084">
    <property type="entry name" value="NUDIX_hydrolase_CS"/>
</dbReference>
<dbReference type="InterPro" id="IPR000086">
    <property type="entry name" value="NUDIX_hydrolase_dom"/>
</dbReference>
<dbReference type="InterPro" id="IPR022927">
    <property type="entry name" value="RppH"/>
</dbReference>
<dbReference type="NCBIfam" id="NF001935">
    <property type="entry name" value="PRK00714.1-2"/>
    <property type="match status" value="1"/>
</dbReference>
<dbReference type="NCBIfam" id="NF001937">
    <property type="entry name" value="PRK00714.1-4"/>
    <property type="match status" value="1"/>
</dbReference>
<dbReference type="NCBIfam" id="NF001938">
    <property type="entry name" value="PRK00714.1-5"/>
    <property type="match status" value="1"/>
</dbReference>
<dbReference type="PANTHER" id="PTHR43736">
    <property type="entry name" value="ADP-RIBOSE PYROPHOSPHATASE"/>
    <property type="match status" value="1"/>
</dbReference>
<dbReference type="PANTHER" id="PTHR43736:SF1">
    <property type="entry name" value="DIHYDRONEOPTERIN TRIPHOSPHATE DIPHOSPHATASE"/>
    <property type="match status" value="1"/>
</dbReference>
<dbReference type="Pfam" id="PF00293">
    <property type="entry name" value="NUDIX"/>
    <property type="match status" value="1"/>
</dbReference>
<dbReference type="PRINTS" id="PR00502">
    <property type="entry name" value="NUDIXFAMILY"/>
</dbReference>
<dbReference type="SUPFAM" id="SSF55811">
    <property type="entry name" value="Nudix"/>
    <property type="match status" value="1"/>
</dbReference>
<dbReference type="PROSITE" id="PS51462">
    <property type="entry name" value="NUDIX"/>
    <property type="match status" value="1"/>
</dbReference>
<dbReference type="PROSITE" id="PS00893">
    <property type="entry name" value="NUDIX_BOX"/>
    <property type="match status" value="1"/>
</dbReference>
<proteinExistence type="inferred from homology"/>
<evidence type="ECO:0000255" key="1">
    <source>
        <dbReference type="HAMAP-Rule" id="MF_00298"/>
    </source>
</evidence>
<organism>
    <name type="scientific">Neisseria meningitidis serogroup A / serotype 4A (strain DSM 15465 / Z2491)</name>
    <dbReference type="NCBI Taxonomy" id="122587"/>
    <lineage>
        <taxon>Bacteria</taxon>
        <taxon>Pseudomonadati</taxon>
        <taxon>Pseudomonadota</taxon>
        <taxon>Betaproteobacteria</taxon>
        <taxon>Neisseriales</taxon>
        <taxon>Neisseriaceae</taxon>
        <taxon>Neisseria</taxon>
    </lineage>
</organism>
<accession>Q9JT78</accession>
<accession>A1ITE0</accession>
<keyword id="KW-0378">Hydrolase</keyword>